<protein>
    <recommendedName>
        <fullName evidence="1">Holo-[acyl-carrier-protein] synthase</fullName>
        <shortName evidence="1">Holo-ACP synthase</shortName>
        <ecNumber evidence="1">2.7.8.7</ecNumber>
    </recommendedName>
    <alternativeName>
        <fullName evidence="1">4'-phosphopantetheinyl transferase AcpS</fullName>
    </alternativeName>
</protein>
<evidence type="ECO:0000255" key="1">
    <source>
        <dbReference type="HAMAP-Rule" id="MF_00101"/>
    </source>
</evidence>
<reference key="1">
    <citation type="journal article" date="2006" name="BMC Genomics">
        <title>Comparative genome analysis: selection pressure on the Borrelia vls cassettes is essential for infectivity.</title>
        <authorList>
            <person name="Gloeckner G."/>
            <person name="Schulte-Spechtel U."/>
            <person name="Schilhabel M."/>
            <person name="Felder M."/>
            <person name="Suehnel J."/>
            <person name="Wilske B."/>
            <person name="Platzer M."/>
        </authorList>
    </citation>
    <scope>NUCLEOTIDE SEQUENCE [LARGE SCALE GENOMIC DNA]</scope>
    <source>
        <strain>PKo</strain>
    </source>
</reference>
<reference key="2">
    <citation type="journal article" date="2011" name="J. Bacteriol.">
        <title>Whole-genome sequences of two Borrelia afzelii and two Borrelia garinii Lyme disease agent isolates.</title>
        <authorList>
            <person name="Casjens S.R."/>
            <person name="Mongodin E.F."/>
            <person name="Qiu W.G."/>
            <person name="Dunn J.J."/>
            <person name="Luft B.J."/>
            <person name="Fraser-Liggett C.M."/>
            <person name="Schutzer S.E."/>
        </authorList>
    </citation>
    <scope>NUCLEOTIDE SEQUENCE [LARGE SCALE GENOMIC DNA]</scope>
    <source>
        <strain>PKo</strain>
    </source>
</reference>
<organism>
    <name type="scientific">Borreliella afzelii (strain PKo)</name>
    <name type="common">Borrelia afzelii</name>
    <dbReference type="NCBI Taxonomy" id="390236"/>
    <lineage>
        <taxon>Bacteria</taxon>
        <taxon>Pseudomonadati</taxon>
        <taxon>Spirochaetota</taxon>
        <taxon>Spirochaetia</taxon>
        <taxon>Spirochaetales</taxon>
        <taxon>Borreliaceae</taxon>
        <taxon>Borreliella</taxon>
    </lineage>
</organism>
<proteinExistence type="inferred from homology"/>
<feature type="chain" id="PRO_1000008390" description="Holo-[acyl-carrier-protein] synthase">
    <location>
        <begin position="1"/>
        <end position="124"/>
    </location>
</feature>
<feature type="binding site" evidence="1">
    <location>
        <position position="7"/>
    </location>
    <ligand>
        <name>Mg(2+)</name>
        <dbReference type="ChEBI" id="CHEBI:18420"/>
    </ligand>
</feature>
<feature type="binding site" evidence="1">
    <location>
        <position position="55"/>
    </location>
    <ligand>
        <name>Mg(2+)</name>
        <dbReference type="ChEBI" id="CHEBI:18420"/>
    </ligand>
</feature>
<gene>
    <name evidence="1" type="primary">acpS</name>
    <name type="ordered locus">BAPKO_0009</name>
    <name type="ordered locus">BafPKo_0010</name>
</gene>
<dbReference type="EC" id="2.7.8.7" evidence="1"/>
<dbReference type="EMBL" id="CP000395">
    <property type="protein sequence ID" value="ABH01274.1"/>
    <property type="molecule type" value="Genomic_DNA"/>
</dbReference>
<dbReference type="EMBL" id="CP002933">
    <property type="protein sequence ID" value="AEL69244.1"/>
    <property type="molecule type" value="Genomic_DNA"/>
</dbReference>
<dbReference type="RefSeq" id="WP_011600781.1">
    <property type="nucleotide sequence ID" value="NZ_CP160066.1"/>
</dbReference>
<dbReference type="SMR" id="Q0SPF4"/>
<dbReference type="GeneID" id="77264854"/>
<dbReference type="KEGG" id="baf:BAPKO_0009"/>
<dbReference type="KEGG" id="bafz:BafPKo_0010"/>
<dbReference type="PATRIC" id="fig|390236.22.peg.10"/>
<dbReference type="eggNOG" id="COG0736">
    <property type="taxonomic scope" value="Bacteria"/>
</dbReference>
<dbReference type="HOGENOM" id="CLU_089696_5_0_12"/>
<dbReference type="OrthoDB" id="517356at2"/>
<dbReference type="Proteomes" id="UP000005216">
    <property type="component" value="Chromosome"/>
</dbReference>
<dbReference type="GO" id="GO:0005737">
    <property type="term" value="C:cytoplasm"/>
    <property type="evidence" value="ECO:0007669"/>
    <property type="project" value="UniProtKB-SubCell"/>
</dbReference>
<dbReference type="GO" id="GO:0008897">
    <property type="term" value="F:holo-[acyl-carrier-protein] synthase activity"/>
    <property type="evidence" value="ECO:0007669"/>
    <property type="project" value="UniProtKB-UniRule"/>
</dbReference>
<dbReference type="GO" id="GO:0000287">
    <property type="term" value="F:magnesium ion binding"/>
    <property type="evidence" value="ECO:0007669"/>
    <property type="project" value="UniProtKB-UniRule"/>
</dbReference>
<dbReference type="GO" id="GO:0006633">
    <property type="term" value="P:fatty acid biosynthetic process"/>
    <property type="evidence" value="ECO:0007669"/>
    <property type="project" value="UniProtKB-UniRule"/>
</dbReference>
<dbReference type="Gene3D" id="3.90.470.20">
    <property type="entry name" value="4'-phosphopantetheinyl transferase domain"/>
    <property type="match status" value="1"/>
</dbReference>
<dbReference type="HAMAP" id="MF_00101">
    <property type="entry name" value="AcpS"/>
    <property type="match status" value="1"/>
</dbReference>
<dbReference type="InterPro" id="IPR008278">
    <property type="entry name" value="4-PPantetheinyl_Trfase_dom"/>
</dbReference>
<dbReference type="InterPro" id="IPR037143">
    <property type="entry name" value="4-PPantetheinyl_Trfase_dom_sf"/>
</dbReference>
<dbReference type="InterPro" id="IPR002582">
    <property type="entry name" value="ACPS"/>
</dbReference>
<dbReference type="InterPro" id="IPR004568">
    <property type="entry name" value="Ppantetheine-prot_Trfase_dom"/>
</dbReference>
<dbReference type="NCBIfam" id="TIGR00516">
    <property type="entry name" value="acpS"/>
    <property type="match status" value="1"/>
</dbReference>
<dbReference type="NCBIfam" id="TIGR00556">
    <property type="entry name" value="pantethn_trn"/>
    <property type="match status" value="1"/>
</dbReference>
<dbReference type="Pfam" id="PF01648">
    <property type="entry name" value="ACPS"/>
    <property type="match status" value="1"/>
</dbReference>
<dbReference type="SUPFAM" id="SSF56214">
    <property type="entry name" value="4'-phosphopantetheinyl transferase"/>
    <property type="match status" value="1"/>
</dbReference>
<keyword id="KW-0963">Cytoplasm</keyword>
<keyword id="KW-0275">Fatty acid biosynthesis</keyword>
<keyword id="KW-0276">Fatty acid metabolism</keyword>
<keyword id="KW-0444">Lipid biosynthesis</keyword>
<keyword id="KW-0443">Lipid metabolism</keyword>
<keyword id="KW-0460">Magnesium</keyword>
<keyword id="KW-0479">Metal-binding</keyword>
<keyword id="KW-0808">Transferase</keyword>
<name>ACPS_BORAP</name>
<accession>Q0SPF4</accession>
<accession>G0IQ40</accession>
<sequence>MKSIGCDIIKVERFKSFLENKKKMERFFTHKEIENFKLKGGSIIESLAGKFAAKESLIKALTPLLQYKIRYSLKDIEVIKSLKGNAKFCLHNEIEKFAIKMNLKLYLTISHEKEYAIAFVMVEN</sequence>
<comment type="function">
    <text evidence="1">Transfers the 4'-phosphopantetheine moiety from coenzyme A to a Ser of acyl-carrier-protein.</text>
</comment>
<comment type="catalytic activity">
    <reaction evidence="1">
        <text>apo-[ACP] + CoA = holo-[ACP] + adenosine 3',5'-bisphosphate + H(+)</text>
        <dbReference type="Rhea" id="RHEA:12068"/>
        <dbReference type="Rhea" id="RHEA-COMP:9685"/>
        <dbReference type="Rhea" id="RHEA-COMP:9690"/>
        <dbReference type="ChEBI" id="CHEBI:15378"/>
        <dbReference type="ChEBI" id="CHEBI:29999"/>
        <dbReference type="ChEBI" id="CHEBI:57287"/>
        <dbReference type="ChEBI" id="CHEBI:58343"/>
        <dbReference type="ChEBI" id="CHEBI:64479"/>
        <dbReference type="EC" id="2.7.8.7"/>
    </reaction>
</comment>
<comment type="cofactor">
    <cofactor evidence="1">
        <name>Mg(2+)</name>
        <dbReference type="ChEBI" id="CHEBI:18420"/>
    </cofactor>
</comment>
<comment type="subcellular location">
    <subcellularLocation>
        <location evidence="1">Cytoplasm</location>
    </subcellularLocation>
</comment>
<comment type="similarity">
    <text evidence="1">Belongs to the P-Pant transferase superfamily. AcpS family.</text>
</comment>